<organism>
    <name type="scientific">Polynucleobacter necessarius subsp. necessarius (strain STIR1)</name>
    <dbReference type="NCBI Taxonomy" id="452638"/>
    <lineage>
        <taxon>Bacteria</taxon>
        <taxon>Pseudomonadati</taxon>
        <taxon>Pseudomonadota</taxon>
        <taxon>Betaproteobacteria</taxon>
        <taxon>Burkholderiales</taxon>
        <taxon>Burkholderiaceae</taxon>
        <taxon>Polynucleobacter</taxon>
    </lineage>
</organism>
<dbReference type="EC" id="3.1.26.4" evidence="1"/>
<dbReference type="EMBL" id="CP001010">
    <property type="protein sequence ID" value="ACB43784.1"/>
    <property type="molecule type" value="Genomic_DNA"/>
</dbReference>
<dbReference type="SMR" id="B1XTV7"/>
<dbReference type="STRING" id="452638.Pnec_0521"/>
<dbReference type="KEGG" id="pne:Pnec_0521"/>
<dbReference type="eggNOG" id="COG0164">
    <property type="taxonomic scope" value="Bacteria"/>
</dbReference>
<dbReference type="HOGENOM" id="CLU_036532_3_2_4"/>
<dbReference type="OrthoDB" id="9803420at2"/>
<dbReference type="GO" id="GO:0005737">
    <property type="term" value="C:cytoplasm"/>
    <property type="evidence" value="ECO:0007669"/>
    <property type="project" value="UniProtKB-SubCell"/>
</dbReference>
<dbReference type="GO" id="GO:0032299">
    <property type="term" value="C:ribonuclease H2 complex"/>
    <property type="evidence" value="ECO:0007669"/>
    <property type="project" value="TreeGrafter"/>
</dbReference>
<dbReference type="GO" id="GO:0030145">
    <property type="term" value="F:manganese ion binding"/>
    <property type="evidence" value="ECO:0007669"/>
    <property type="project" value="UniProtKB-UniRule"/>
</dbReference>
<dbReference type="GO" id="GO:0003723">
    <property type="term" value="F:RNA binding"/>
    <property type="evidence" value="ECO:0007669"/>
    <property type="project" value="InterPro"/>
</dbReference>
<dbReference type="GO" id="GO:0004523">
    <property type="term" value="F:RNA-DNA hybrid ribonuclease activity"/>
    <property type="evidence" value="ECO:0007669"/>
    <property type="project" value="UniProtKB-UniRule"/>
</dbReference>
<dbReference type="GO" id="GO:0043137">
    <property type="term" value="P:DNA replication, removal of RNA primer"/>
    <property type="evidence" value="ECO:0007669"/>
    <property type="project" value="TreeGrafter"/>
</dbReference>
<dbReference type="GO" id="GO:0006298">
    <property type="term" value="P:mismatch repair"/>
    <property type="evidence" value="ECO:0007669"/>
    <property type="project" value="TreeGrafter"/>
</dbReference>
<dbReference type="CDD" id="cd07182">
    <property type="entry name" value="RNase_HII_bacteria_HII_like"/>
    <property type="match status" value="1"/>
</dbReference>
<dbReference type="FunFam" id="3.30.420.10:FF:000006">
    <property type="entry name" value="Ribonuclease HII"/>
    <property type="match status" value="1"/>
</dbReference>
<dbReference type="Gene3D" id="3.30.420.10">
    <property type="entry name" value="Ribonuclease H-like superfamily/Ribonuclease H"/>
    <property type="match status" value="1"/>
</dbReference>
<dbReference type="HAMAP" id="MF_00052_B">
    <property type="entry name" value="RNase_HII_B"/>
    <property type="match status" value="1"/>
</dbReference>
<dbReference type="InterPro" id="IPR022898">
    <property type="entry name" value="RNase_HII"/>
</dbReference>
<dbReference type="InterPro" id="IPR001352">
    <property type="entry name" value="RNase_HII/HIII"/>
</dbReference>
<dbReference type="InterPro" id="IPR024567">
    <property type="entry name" value="RNase_HII/HIII_dom"/>
</dbReference>
<dbReference type="InterPro" id="IPR012337">
    <property type="entry name" value="RNaseH-like_sf"/>
</dbReference>
<dbReference type="InterPro" id="IPR036397">
    <property type="entry name" value="RNaseH_sf"/>
</dbReference>
<dbReference type="NCBIfam" id="NF000595">
    <property type="entry name" value="PRK00015.1-3"/>
    <property type="match status" value="1"/>
</dbReference>
<dbReference type="NCBIfam" id="NF000596">
    <property type="entry name" value="PRK00015.1-4"/>
    <property type="match status" value="1"/>
</dbReference>
<dbReference type="PANTHER" id="PTHR10954">
    <property type="entry name" value="RIBONUCLEASE H2 SUBUNIT A"/>
    <property type="match status" value="1"/>
</dbReference>
<dbReference type="PANTHER" id="PTHR10954:SF18">
    <property type="entry name" value="RIBONUCLEASE HII"/>
    <property type="match status" value="1"/>
</dbReference>
<dbReference type="Pfam" id="PF01351">
    <property type="entry name" value="RNase_HII"/>
    <property type="match status" value="1"/>
</dbReference>
<dbReference type="SUPFAM" id="SSF53098">
    <property type="entry name" value="Ribonuclease H-like"/>
    <property type="match status" value="1"/>
</dbReference>
<dbReference type="PROSITE" id="PS51975">
    <property type="entry name" value="RNASE_H_2"/>
    <property type="match status" value="1"/>
</dbReference>
<sequence>MSIIWVCGVDEAGRGPLVGAVVAGAVVLDPNNPIEGLKDSKKLTAARREYLYEQIMEKAKAWGVGEASPTEIDEINILQATMLAMRRAIEDLATRLGAWPDKALIDGNRCPELPIAAEAIIKGDTKEPAISAASIVAKVTRDRQMMSLHERHPEYGFAQHMGYPTEAHFAALKQYGACDQHRRCFSPVRKALESVAS</sequence>
<keyword id="KW-0963">Cytoplasm</keyword>
<keyword id="KW-0255">Endonuclease</keyword>
<keyword id="KW-0378">Hydrolase</keyword>
<keyword id="KW-0464">Manganese</keyword>
<keyword id="KW-0479">Metal-binding</keyword>
<keyword id="KW-0540">Nuclease</keyword>
<gene>
    <name evidence="1" type="primary">rnhB</name>
    <name type="ordered locus">Pnec_0521</name>
</gene>
<proteinExistence type="inferred from homology"/>
<protein>
    <recommendedName>
        <fullName evidence="1">Ribonuclease HII</fullName>
        <shortName evidence="1">RNase HII</shortName>
        <ecNumber evidence="1">3.1.26.4</ecNumber>
    </recommendedName>
</protein>
<comment type="function">
    <text evidence="1">Endonuclease that specifically degrades the RNA of RNA-DNA hybrids.</text>
</comment>
<comment type="catalytic activity">
    <reaction evidence="1">
        <text>Endonucleolytic cleavage to 5'-phosphomonoester.</text>
        <dbReference type="EC" id="3.1.26.4"/>
    </reaction>
</comment>
<comment type="cofactor">
    <cofactor evidence="1">
        <name>Mn(2+)</name>
        <dbReference type="ChEBI" id="CHEBI:29035"/>
    </cofactor>
    <cofactor evidence="1">
        <name>Mg(2+)</name>
        <dbReference type="ChEBI" id="CHEBI:18420"/>
    </cofactor>
    <text evidence="1">Manganese or magnesium. Binds 1 divalent metal ion per monomer in the absence of substrate. May bind a second metal ion after substrate binding.</text>
</comment>
<comment type="subcellular location">
    <subcellularLocation>
        <location evidence="1">Cytoplasm</location>
    </subcellularLocation>
</comment>
<comment type="similarity">
    <text evidence="1">Belongs to the RNase HII family.</text>
</comment>
<reference key="1">
    <citation type="journal article" date="2013" name="Proc. Natl. Acad. Sci. U.S.A.">
        <title>Polynucleobacter necessarius, a model for genome reduction in both free-living and symbiotic bacteria.</title>
        <authorList>
            <person name="Boscaro V."/>
            <person name="Felletti M."/>
            <person name="Vannini C."/>
            <person name="Ackerman M.S."/>
            <person name="Chain P.S."/>
            <person name="Malfatti S."/>
            <person name="Vergez L.M."/>
            <person name="Shin M."/>
            <person name="Doak T.G."/>
            <person name="Lynch M."/>
            <person name="Petroni G."/>
        </authorList>
    </citation>
    <scope>NUCLEOTIDE SEQUENCE [LARGE SCALE GENOMIC DNA]</scope>
    <source>
        <strain>STIR1</strain>
    </source>
</reference>
<name>RNH2_POLNS</name>
<feature type="chain" id="PRO_1000091640" description="Ribonuclease HII">
    <location>
        <begin position="1"/>
        <end position="197"/>
    </location>
</feature>
<feature type="domain" description="RNase H type-2" evidence="2">
    <location>
        <begin position="4"/>
        <end position="197"/>
    </location>
</feature>
<feature type="binding site" evidence="1">
    <location>
        <position position="10"/>
    </location>
    <ligand>
        <name>a divalent metal cation</name>
        <dbReference type="ChEBI" id="CHEBI:60240"/>
    </ligand>
</feature>
<feature type="binding site" evidence="1">
    <location>
        <position position="11"/>
    </location>
    <ligand>
        <name>a divalent metal cation</name>
        <dbReference type="ChEBI" id="CHEBI:60240"/>
    </ligand>
</feature>
<feature type="binding site" evidence="1">
    <location>
        <position position="106"/>
    </location>
    <ligand>
        <name>a divalent metal cation</name>
        <dbReference type="ChEBI" id="CHEBI:60240"/>
    </ligand>
</feature>
<accession>B1XTV7</accession>
<evidence type="ECO:0000255" key="1">
    <source>
        <dbReference type="HAMAP-Rule" id="MF_00052"/>
    </source>
</evidence>
<evidence type="ECO:0000255" key="2">
    <source>
        <dbReference type="PROSITE-ProRule" id="PRU01319"/>
    </source>
</evidence>